<keyword id="KW-1185">Reference proteome</keyword>
<name>Y1612_AQUAE</name>
<feature type="chain" id="PRO_0000157368" description="Uncharacterized protein aq_1612">
    <location>
        <begin position="1"/>
        <end position="486"/>
    </location>
</feature>
<accession>O67542</accession>
<evidence type="ECO:0000305" key="1"/>
<organism>
    <name type="scientific">Aquifex aeolicus (strain VF5)</name>
    <dbReference type="NCBI Taxonomy" id="224324"/>
    <lineage>
        <taxon>Bacteria</taxon>
        <taxon>Pseudomonadati</taxon>
        <taxon>Aquificota</taxon>
        <taxon>Aquificia</taxon>
        <taxon>Aquificales</taxon>
        <taxon>Aquificaceae</taxon>
        <taxon>Aquifex</taxon>
    </lineage>
</organism>
<sequence>MGYKYRDLHDFIKDLEKEGELVRIKEPLSPILEITEVTDRVCKMPGGGKALLFENPKGYRIPVLTNLYGSEKRIKKALGYENLEDIGWKLYRILKPEVPKTFLEKIKKLPELKKLNDAIPKVVKRGKVQEEVIMGDINLEDLPILKCWPKDGGRYITFGQVITKDPESGIRNVGLYRLQVLDKDKLAVHWQIHKDGNHHYWKAKRLGKKLEVAIAIGGEPPLPYVASAPLPPEVDEYLFAGIIMERPVELVKGLTVDLEYPANAEIAIEGYVDPEEPLVDEGPFGDHTGFYTPVDKYPQMHVTAIVMRKDPIYLTTIVGRPPQEDKYLGWATERIFLPLIKFNLPEVVDYHLPAEGCFHNFCFVSIKKRYPGHAFKVAYALLGLGLMSLEKHIVVFDDWINVQDIGEVLWAWGNNVDPQRDVLILKGPIDVLDHATNEVGFGGKMIIDATTKWKEEGYTREWPEVIEMSPEVKKRIDEIWDRLGIE</sequence>
<reference key="1">
    <citation type="journal article" date="1998" name="Nature">
        <title>The complete genome of the hyperthermophilic bacterium Aquifex aeolicus.</title>
        <authorList>
            <person name="Deckert G."/>
            <person name="Warren P.V."/>
            <person name="Gaasterland T."/>
            <person name="Young W.G."/>
            <person name="Lenox A.L."/>
            <person name="Graham D.E."/>
            <person name="Overbeek R."/>
            <person name="Snead M.A."/>
            <person name="Keller M."/>
            <person name="Aujay M."/>
            <person name="Huber R."/>
            <person name="Feldman R.A."/>
            <person name="Short J.M."/>
            <person name="Olsen G.J."/>
            <person name="Swanson R.V."/>
        </authorList>
    </citation>
    <scope>NUCLEOTIDE SEQUENCE [LARGE SCALE GENOMIC DNA]</scope>
    <source>
        <strain>VF5</strain>
    </source>
</reference>
<gene>
    <name type="ordered locus">aq_1612</name>
</gene>
<protein>
    <recommendedName>
        <fullName>Uncharacterized protein aq_1612</fullName>
    </recommendedName>
</protein>
<dbReference type="EMBL" id="AE000657">
    <property type="protein sequence ID" value="AAC07507.1"/>
    <property type="molecule type" value="Genomic_DNA"/>
</dbReference>
<dbReference type="PIR" id="D70439">
    <property type="entry name" value="D70439"/>
</dbReference>
<dbReference type="RefSeq" id="NP_214107.1">
    <property type="nucleotide sequence ID" value="NC_000918.1"/>
</dbReference>
<dbReference type="RefSeq" id="WP_010881045.1">
    <property type="nucleotide sequence ID" value="NC_000918.1"/>
</dbReference>
<dbReference type="SMR" id="O67542"/>
<dbReference type="FunCoup" id="O67542">
    <property type="interactions" value="310"/>
</dbReference>
<dbReference type="STRING" id="224324.aq_1612"/>
<dbReference type="EnsemblBacteria" id="AAC07507">
    <property type="protein sequence ID" value="AAC07507"/>
    <property type="gene ID" value="aq_1612"/>
</dbReference>
<dbReference type="KEGG" id="aae:aq_1612"/>
<dbReference type="PATRIC" id="fig|224324.8.peg.1245"/>
<dbReference type="eggNOG" id="COG0043">
    <property type="taxonomic scope" value="Bacteria"/>
</dbReference>
<dbReference type="HOGENOM" id="CLU_023348_4_1_0"/>
<dbReference type="InParanoid" id="O67542"/>
<dbReference type="OrthoDB" id="9809841at2"/>
<dbReference type="Proteomes" id="UP000000798">
    <property type="component" value="Chromosome"/>
</dbReference>
<dbReference type="GO" id="GO:0005737">
    <property type="term" value="C:cytoplasm"/>
    <property type="evidence" value="ECO:0000318"/>
    <property type="project" value="GO_Central"/>
</dbReference>
<dbReference type="GO" id="GO:0005829">
    <property type="term" value="C:cytosol"/>
    <property type="evidence" value="ECO:0000318"/>
    <property type="project" value="GO_Central"/>
</dbReference>
<dbReference type="GO" id="GO:0008694">
    <property type="term" value="F:3-octaprenyl-4-hydroxybenzoate carboxy-lyase activity"/>
    <property type="evidence" value="ECO:0000318"/>
    <property type="project" value="GO_Central"/>
</dbReference>
<dbReference type="GO" id="GO:0006744">
    <property type="term" value="P:ubiquinone biosynthetic process"/>
    <property type="evidence" value="ECO:0000318"/>
    <property type="project" value="GO_Central"/>
</dbReference>
<dbReference type="FunFam" id="3.40.1670.10:FF:000003">
    <property type="entry name" value="Phenolic acid decarboxylase"/>
    <property type="match status" value="1"/>
</dbReference>
<dbReference type="Gene3D" id="1.20.5.570">
    <property type="entry name" value="Single helix bin"/>
    <property type="match status" value="1"/>
</dbReference>
<dbReference type="Gene3D" id="3.40.1670.10">
    <property type="entry name" value="UbiD C-terminal domain-like"/>
    <property type="match status" value="1"/>
</dbReference>
<dbReference type="InterPro" id="IPR022390">
    <property type="entry name" value="HBDC"/>
</dbReference>
<dbReference type="InterPro" id="IPR002830">
    <property type="entry name" value="UbiD"/>
</dbReference>
<dbReference type="InterPro" id="IPR049381">
    <property type="entry name" value="UbiD-like_C"/>
</dbReference>
<dbReference type="InterPro" id="IPR049383">
    <property type="entry name" value="UbiD-like_N"/>
</dbReference>
<dbReference type="InterPro" id="IPR048304">
    <property type="entry name" value="UbiD_Rift_dom"/>
</dbReference>
<dbReference type="NCBIfam" id="TIGR03701">
    <property type="entry name" value="mena_SCO4490"/>
    <property type="match status" value="1"/>
</dbReference>
<dbReference type="NCBIfam" id="TIGR00148">
    <property type="entry name" value="UbiD family decarboxylase"/>
    <property type="match status" value="1"/>
</dbReference>
<dbReference type="PANTHER" id="PTHR30108">
    <property type="entry name" value="3-OCTAPRENYL-4-HYDROXYBENZOATE CARBOXY-LYASE-RELATED"/>
    <property type="match status" value="1"/>
</dbReference>
<dbReference type="PANTHER" id="PTHR30108:SF17">
    <property type="entry name" value="FERULIC ACID DECARBOXYLASE 1"/>
    <property type="match status" value="1"/>
</dbReference>
<dbReference type="Pfam" id="PF01977">
    <property type="entry name" value="UbiD"/>
    <property type="match status" value="1"/>
</dbReference>
<dbReference type="Pfam" id="PF20696">
    <property type="entry name" value="UbiD_C"/>
    <property type="match status" value="1"/>
</dbReference>
<dbReference type="Pfam" id="PF20695">
    <property type="entry name" value="UbiD_N"/>
    <property type="match status" value="1"/>
</dbReference>
<dbReference type="SUPFAM" id="SSF50475">
    <property type="entry name" value="FMN-binding split barrel"/>
    <property type="match status" value="1"/>
</dbReference>
<dbReference type="SUPFAM" id="SSF143968">
    <property type="entry name" value="UbiD C-terminal domain-like"/>
    <property type="match status" value="1"/>
</dbReference>
<proteinExistence type="inferred from homology"/>
<comment type="similarity">
    <text evidence="1">Belongs to the UbiD family.</text>
</comment>